<accession>Q1RI85</accession>
<dbReference type="EMBL" id="CP000087">
    <property type="protein sequence ID" value="ABE04929.1"/>
    <property type="molecule type" value="Genomic_DNA"/>
</dbReference>
<dbReference type="RefSeq" id="WP_011477514.1">
    <property type="nucleotide sequence ID" value="NC_007940.1"/>
</dbReference>
<dbReference type="SMR" id="Q1RI85"/>
<dbReference type="KEGG" id="rbe:RBE_0848"/>
<dbReference type="eggNOG" id="COG0593">
    <property type="taxonomic scope" value="Bacteria"/>
</dbReference>
<dbReference type="HOGENOM" id="CLU_026910_3_0_5"/>
<dbReference type="OrthoDB" id="9807019at2"/>
<dbReference type="Proteomes" id="UP000001951">
    <property type="component" value="Chromosome"/>
</dbReference>
<dbReference type="GO" id="GO:0005737">
    <property type="term" value="C:cytoplasm"/>
    <property type="evidence" value="ECO:0007669"/>
    <property type="project" value="UniProtKB-SubCell"/>
</dbReference>
<dbReference type="GO" id="GO:0005886">
    <property type="term" value="C:plasma membrane"/>
    <property type="evidence" value="ECO:0007669"/>
    <property type="project" value="TreeGrafter"/>
</dbReference>
<dbReference type="GO" id="GO:0005524">
    <property type="term" value="F:ATP binding"/>
    <property type="evidence" value="ECO:0007669"/>
    <property type="project" value="UniProtKB-UniRule"/>
</dbReference>
<dbReference type="GO" id="GO:0016887">
    <property type="term" value="F:ATP hydrolysis activity"/>
    <property type="evidence" value="ECO:0007669"/>
    <property type="project" value="InterPro"/>
</dbReference>
<dbReference type="GO" id="GO:0003688">
    <property type="term" value="F:DNA replication origin binding"/>
    <property type="evidence" value="ECO:0007669"/>
    <property type="project" value="UniProtKB-UniRule"/>
</dbReference>
<dbReference type="GO" id="GO:0008289">
    <property type="term" value="F:lipid binding"/>
    <property type="evidence" value="ECO:0007669"/>
    <property type="project" value="UniProtKB-KW"/>
</dbReference>
<dbReference type="GO" id="GO:0006270">
    <property type="term" value="P:DNA replication initiation"/>
    <property type="evidence" value="ECO:0007669"/>
    <property type="project" value="UniProtKB-UniRule"/>
</dbReference>
<dbReference type="GO" id="GO:0006275">
    <property type="term" value="P:regulation of DNA replication"/>
    <property type="evidence" value="ECO:0007669"/>
    <property type="project" value="UniProtKB-UniRule"/>
</dbReference>
<dbReference type="CDD" id="cd00009">
    <property type="entry name" value="AAA"/>
    <property type="match status" value="1"/>
</dbReference>
<dbReference type="CDD" id="cd06571">
    <property type="entry name" value="Bac_DnaA_C"/>
    <property type="match status" value="1"/>
</dbReference>
<dbReference type="FunFam" id="3.40.50.300:FF:000668">
    <property type="entry name" value="Chromosomal replication initiator protein DnaA"/>
    <property type="match status" value="1"/>
</dbReference>
<dbReference type="Gene3D" id="1.10.1750.10">
    <property type="match status" value="1"/>
</dbReference>
<dbReference type="Gene3D" id="1.10.8.60">
    <property type="match status" value="1"/>
</dbReference>
<dbReference type="Gene3D" id="3.30.300.180">
    <property type="match status" value="1"/>
</dbReference>
<dbReference type="Gene3D" id="3.40.50.300">
    <property type="entry name" value="P-loop containing nucleotide triphosphate hydrolases"/>
    <property type="match status" value="1"/>
</dbReference>
<dbReference type="HAMAP" id="MF_00377">
    <property type="entry name" value="DnaA_bact"/>
    <property type="match status" value="1"/>
</dbReference>
<dbReference type="InterPro" id="IPR003593">
    <property type="entry name" value="AAA+_ATPase"/>
</dbReference>
<dbReference type="InterPro" id="IPR001957">
    <property type="entry name" value="Chromosome_initiator_DnaA"/>
</dbReference>
<dbReference type="InterPro" id="IPR020591">
    <property type="entry name" value="Chromosome_initiator_DnaA-like"/>
</dbReference>
<dbReference type="InterPro" id="IPR018312">
    <property type="entry name" value="Chromosome_initiator_DnaA_CS"/>
</dbReference>
<dbReference type="InterPro" id="IPR013159">
    <property type="entry name" value="DnaA_C"/>
</dbReference>
<dbReference type="InterPro" id="IPR013317">
    <property type="entry name" value="DnaA_dom"/>
</dbReference>
<dbReference type="InterPro" id="IPR024633">
    <property type="entry name" value="DnaA_N_dom"/>
</dbReference>
<dbReference type="InterPro" id="IPR038454">
    <property type="entry name" value="DnaA_N_sf"/>
</dbReference>
<dbReference type="InterPro" id="IPR027417">
    <property type="entry name" value="P-loop_NTPase"/>
</dbReference>
<dbReference type="InterPro" id="IPR010921">
    <property type="entry name" value="Trp_repressor/repl_initiator"/>
</dbReference>
<dbReference type="NCBIfam" id="TIGR00362">
    <property type="entry name" value="DnaA"/>
    <property type="match status" value="1"/>
</dbReference>
<dbReference type="PANTHER" id="PTHR30050">
    <property type="entry name" value="CHROMOSOMAL REPLICATION INITIATOR PROTEIN DNAA"/>
    <property type="match status" value="1"/>
</dbReference>
<dbReference type="PANTHER" id="PTHR30050:SF2">
    <property type="entry name" value="CHROMOSOMAL REPLICATION INITIATOR PROTEIN DNAA"/>
    <property type="match status" value="1"/>
</dbReference>
<dbReference type="Pfam" id="PF00308">
    <property type="entry name" value="Bac_DnaA"/>
    <property type="match status" value="1"/>
</dbReference>
<dbReference type="Pfam" id="PF08299">
    <property type="entry name" value="Bac_DnaA_C"/>
    <property type="match status" value="1"/>
</dbReference>
<dbReference type="Pfam" id="PF11638">
    <property type="entry name" value="DnaA_N"/>
    <property type="match status" value="1"/>
</dbReference>
<dbReference type="PRINTS" id="PR00051">
    <property type="entry name" value="DNAA"/>
</dbReference>
<dbReference type="SMART" id="SM00382">
    <property type="entry name" value="AAA"/>
    <property type="match status" value="1"/>
</dbReference>
<dbReference type="SMART" id="SM00760">
    <property type="entry name" value="Bac_DnaA_C"/>
    <property type="match status" value="1"/>
</dbReference>
<dbReference type="SUPFAM" id="SSF52540">
    <property type="entry name" value="P-loop containing nucleoside triphosphate hydrolases"/>
    <property type="match status" value="1"/>
</dbReference>
<dbReference type="SUPFAM" id="SSF48295">
    <property type="entry name" value="TrpR-like"/>
    <property type="match status" value="1"/>
</dbReference>
<dbReference type="PROSITE" id="PS01008">
    <property type="entry name" value="DNAA"/>
    <property type="match status" value="1"/>
</dbReference>
<name>DNAA_RICBR</name>
<gene>
    <name evidence="1" type="primary">dnaA</name>
    <name type="ordered locus">RBE_0848</name>
</gene>
<comment type="function">
    <text evidence="1">Plays an essential role in the initiation and regulation of chromosomal replication. ATP-DnaA binds to the origin of replication (oriC) to initiate formation of the DNA replication initiation complex once per cell cycle. Binds the DnaA box (a 9 base pair repeat at the origin) and separates the double-stranded (ds)DNA. Forms a right-handed helical filament on oriC DNA; dsDNA binds to the exterior of the filament while single-stranded (ss)DNA is stabiized in the filament's interior. The ATP-DnaA-oriC complex binds and stabilizes one strand of the AT-rich DNA unwinding element (DUE), permitting loading of DNA polymerase. After initiation quickly degrades to an ADP-DnaA complex that is not apt for DNA replication. Binds acidic phospholipids.</text>
</comment>
<comment type="subunit">
    <text evidence="1">Oligomerizes as a right-handed, spiral filament on DNA at oriC.</text>
</comment>
<comment type="subcellular location">
    <subcellularLocation>
        <location evidence="1">Cytoplasm</location>
    </subcellularLocation>
</comment>
<comment type="domain">
    <text evidence="1">Domain I is involved in oligomerization and binding regulators, domain II is flexibile and of varying length in different bacteria, domain III forms the AAA+ region, while domain IV binds dsDNA.</text>
</comment>
<comment type="similarity">
    <text evidence="1">Belongs to the DnaA family.</text>
</comment>
<evidence type="ECO:0000255" key="1">
    <source>
        <dbReference type="HAMAP-Rule" id="MF_00377"/>
    </source>
</evidence>
<feature type="chain" id="PRO_0000277960" description="Chromosomal replication initiator protein DnaA">
    <location>
        <begin position="1"/>
        <end position="463"/>
    </location>
</feature>
<feature type="region of interest" description="Domain I, interacts with DnaA modulators" evidence="1">
    <location>
        <begin position="1"/>
        <end position="84"/>
    </location>
</feature>
<feature type="region of interest" description="Domain II" evidence="1">
    <location>
        <begin position="84"/>
        <end position="124"/>
    </location>
</feature>
<feature type="region of interest" description="Domain III, AAA+ region" evidence="1">
    <location>
        <begin position="125"/>
        <end position="343"/>
    </location>
</feature>
<feature type="region of interest" description="Domain IV, binds dsDNA" evidence="1">
    <location>
        <begin position="344"/>
        <end position="463"/>
    </location>
</feature>
<feature type="binding site" evidence="1">
    <location>
        <position position="171"/>
    </location>
    <ligand>
        <name>ATP</name>
        <dbReference type="ChEBI" id="CHEBI:30616"/>
    </ligand>
</feature>
<feature type="binding site" evidence="1">
    <location>
        <position position="173"/>
    </location>
    <ligand>
        <name>ATP</name>
        <dbReference type="ChEBI" id="CHEBI:30616"/>
    </ligand>
</feature>
<feature type="binding site" evidence="1">
    <location>
        <position position="174"/>
    </location>
    <ligand>
        <name>ATP</name>
        <dbReference type="ChEBI" id="CHEBI:30616"/>
    </ligand>
</feature>
<feature type="binding site" evidence="1">
    <location>
        <position position="175"/>
    </location>
    <ligand>
        <name>ATP</name>
        <dbReference type="ChEBI" id="CHEBI:30616"/>
    </ligand>
</feature>
<sequence>MNTNQIILTNQNDNSVNVWSNVTQDLYNYYGEALYNSWFSKVNFIESSLNTVILCAPTNFIRDWIKSKYSVVILQLFQHYNNAIKTVEIITKELPASNQATLELPTKTFADIGSSELNSENIFSTFDIRFTFDNFVVGAPNELAYAVARAVAESSSAVSESNPLFLYGGVGLGKTHLMHAIGWYIKQNNPSRKVIYMSAEKFMYQFVKALRNKEVMSFKEKFRSVDVLMIDDIQFICGKDSTQEEFFHTFNTLIDNNRQMVISCDRSPSDLDDIEDRIKSRLGWGLVADVHSTTYELRLGILESKIEQMNVKVPKDVIDFLASKIVSNVRELEGALNKVIAHSNFTAKEITLENTQNILRDLLRSNERIITVEDIQKKVANRYNIKLSDMSSPRRMRTIARPRQIAMYLSKILTPKSLVDIGKKFGKKDHTTVMHAIKKVEELLESDLELREEINLMMKILQN</sequence>
<protein>
    <recommendedName>
        <fullName evidence="1">Chromosomal replication initiator protein DnaA</fullName>
    </recommendedName>
</protein>
<proteinExistence type="inferred from homology"/>
<reference key="1">
    <citation type="journal article" date="2006" name="PLoS Genet.">
        <title>Genome sequence of Rickettsia bellii illuminates the role of amoebae in gene exchanges between intracellular pathogens.</title>
        <authorList>
            <person name="Ogata H."/>
            <person name="La Scola B."/>
            <person name="Audic S."/>
            <person name="Renesto P."/>
            <person name="Blanc G."/>
            <person name="Robert C."/>
            <person name="Fournier P.-E."/>
            <person name="Claverie J.-M."/>
            <person name="Raoult D."/>
        </authorList>
    </citation>
    <scope>NUCLEOTIDE SEQUENCE [LARGE SCALE GENOMIC DNA]</scope>
    <source>
        <strain>RML369-C</strain>
    </source>
</reference>
<organism>
    <name type="scientific">Rickettsia bellii (strain RML369-C)</name>
    <dbReference type="NCBI Taxonomy" id="336407"/>
    <lineage>
        <taxon>Bacteria</taxon>
        <taxon>Pseudomonadati</taxon>
        <taxon>Pseudomonadota</taxon>
        <taxon>Alphaproteobacteria</taxon>
        <taxon>Rickettsiales</taxon>
        <taxon>Rickettsiaceae</taxon>
        <taxon>Rickettsieae</taxon>
        <taxon>Rickettsia</taxon>
        <taxon>belli group</taxon>
    </lineage>
</organism>
<keyword id="KW-0067">ATP-binding</keyword>
<keyword id="KW-0963">Cytoplasm</keyword>
<keyword id="KW-0235">DNA replication</keyword>
<keyword id="KW-0238">DNA-binding</keyword>
<keyword id="KW-0446">Lipid-binding</keyword>
<keyword id="KW-0547">Nucleotide-binding</keyword>